<accession>B7KT12</accession>
<gene>
    <name evidence="1" type="primary">rpmB</name>
    <name type="ordered locus">Mchl_3204</name>
</gene>
<organism>
    <name type="scientific">Methylorubrum extorquens (strain CM4 / NCIMB 13688)</name>
    <name type="common">Methylobacterium extorquens</name>
    <dbReference type="NCBI Taxonomy" id="440085"/>
    <lineage>
        <taxon>Bacteria</taxon>
        <taxon>Pseudomonadati</taxon>
        <taxon>Pseudomonadota</taxon>
        <taxon>Alphaproteobacteria</taxon>
        <taxon>Hyphomicrobiales</taxon>
        <taxon>Methylobacteriaceae</taxon>
        <taxon>Methylorubrum</taxon>
    </lineage>
</organism>
<dbReference type="EMBL" id="CP001298">
    <property type="protein sequence ID" value="ACK84042.1"/>
    <property type="molecule type" value="Genomic_DNA"/>
</dbReference>
<dbReference type="RefSeq" id="WP_003599321.1">
    <property type="nucleotide sequence ID" value="NC_011757.1"/>
</dbReference>
<dbReference type="SMR" id="B7KT12"/>
<dbReference type="GeneID" id="72990622"/>
<dbReference type="KEGG" id="mch:Mchl_3204"/>
<dbReference type="HOGENOM" id="CLU_064548_4_2_5"/>
<dbReference type="Proteomes" id="UP000002385">
    <property type="component" value="Chromosome"/>
</dbReference>
<dbReference type="GO" id="GO:0022625">
    <property type="term" value="C:cytosolic large ribosomal subunit"/>
    <property type="evidence" value="ECO:0007669"/>
    <property type="project" value="TreeGrafter"/>
</dbReference>
<dbReference type="GO" id="GO:0003735">
    <property type="term" value="F:structural constituent of ribosome"/>
    <property type="evidence" value="ECO:0007669"/>
    <property type="project" value="InterPro"/>
</dbReference>
<dbReference type="GO" id="GO:0006412">
    <property type="term" value="P:translation"/>
    <property type="evidence" value="ECO:0007669"/>
    <property type="project" value="UniProtKB-UniRule"/>
</dbReference>
<dbReference type="Gene3D" id="2.30.170.40">
    <property type="entry name" value="Ribosomal protein L28/L24"/>
    <property type="match status" value="1"/>
</dbReference>
<dbReference type="HAMAP" id="MF_00373">
    <property type="entry name" value="Ribosomal_bL28"/>
    <property type="match status" value="1"/>
</dbReference>
<dbReference type="InterPro" id="IPR026569">
    <property type="entry name" value="Ribosomal_bL28"/>
</dbReference>
<dbReference type="InterPro" id="IPR034704">
    <property type="entry name" value="Ribosomal_bL28/bL31-like_sf"/>
</dbReference>
<dbReference type="InterPro" id="IPR001383">
    <property type="entry name" value="Ribosomal_bL28_bact-type"/>
</dbReference>
<dbReference type="InterPro" id="IPR037147">
    <property type="entry name" value="Ribosomal_bL28_sf"/>
</dbReference>
<dbReference type="NCBIfam" id="TIGR00009">
    <property type="entry name" value="L28"/>
    <property type="match status" value="1"/>
</dbReference>
<dbReference type="PANTHER" id="PTHR13528">
    <property type="entry name" value="39S RIBOSOMAL PROTEIN L28, MITOCHONDRIAL"/>
    <property type="match status" value="1"/>
</dbReference>
<dbReference type="PANTHER" id="PTHR13528:SF2">
    <property type="entry name" value="LARGE RIBOSOMAL SUBUNIT PROTEIN BL28M"/>
    <property type="match status" value="1"/>
</dbReference>
<dbReference type="Pfam" id="PF00830">
    <property type="entry name" value="Ribosomal_L28"/>
    <property type="match status" value="1"/>
</dbReference>
<dbReference type="SUPFAM" id="SSF143800">
    <property type="entry name" value="L28p-like"/>
    <property type="match status" value="1"/>
</dbReference>
<protein>
    <recommendedName>
        <fullName evidence="1">Large ribosomal subunit protein bL28</fullName>
    </recommendedName>
    <alternativeName>
        <fullName evidence="2">50S ribosomal protein L28</fullName>
    </alternativeName>
</protein>
<name>RL28_METC4</name>
<keyword id="KW-0687">Ribonucleoprotein</keyword>
<keyword id="KW-0689">Ribosomal protein</keyword>
<comment type="similarity">
    <text evidence="1">Belongs to the bacterial ribosomal protein bL28 family.</text>
</comment>
<feature type="chain" id="PRO_1000195930" description="Large ribosomal subunit protein bL28">
    <location>
        <begin position="1"/>
        <end position="101"/>
    </location>
</feature>
<evidence type="ECO:0000255" key="1">
    <source>
        <dbReference type="HAMAP-Rule" id="MF_00373"/>
    </source>
</evidence>
<evidence type="ECO:0000305" key="2"/>
<reference key="1">
    <citation type="submission" date="2008-12" db="EMBL/GenBank/DDBJ databases">
        <title>Complete sequence of chromosome of Methylobacterium chloromethanicum CM4.</title>
        <authorList>
            <consortium name="US DOE Joint Genome Institute"/>
            <person name="Lucas S."/>
            <person name="Copeland A."/>
            <person name="Lapidus A."/>
            <person name="Glavina del Rio T."/>
            <person name="Dalin E."/>
            <person name="Tice H."/>
            <person name="Bruce D."/>
            <person name="Goodwin L."/>
            <person name="Pitluck S."/>
            <person name="Chertkov O."/>
            <person name="Brettin T."/>
            <person name="Detter J.C."/>
            <person name="Han C."/>
            <person name="Larimer F."/>
            <person name="Land M."/>
            <person name="Hauser L."/>
            <person name="Kyrpides N."/>
            <person name="Mikhailova N."/>
            <person name="Marx C."/>
            <person name="Richardson P."/>
        </authorList>
    </citation>
    <scope>NUCLEOTIDE SEQUENCE [LARGE SCALE GENOMIC DNA]</scope>
    <source>
        <strain>CM4 / NCIMB 13688</strain>
    </source>
</reference>
<sequence length="101" mass="11339">MSRRCELTGKAVQVGHLVSHSNRKTKCRFLPNLCNVTLQSDTLNRRVRLRVTAHALRSVEHRGGLDAFLVKAREIELSQTARLLKREIEKKIAEPATPAAA</sequence>
<proteinExistence type="inferred from homology"/>